<dbReference type="PIR" id="A02649">
    <property type="entry name" value="HSTE42"/>
</dbReference>
<dbReference type="SMR" id="P69151"/>
<dbReference type="iPTMnet" id="P69151"/>
<dbReference type="GO" id="GO:0000786">
    <property type="term" value="C:nucleosome"/>
    <property type="evidence" value="ECO:0007669"/>
    <property type="project" value="UniProtKB-KW"/>
</dbReference>
<dbReference type="GO" id="GO:0005634">
    <property type="term" value="C:nucleus"/>
    <property type="evidence" value="ECO:0007669"/>
    <property type="project" value="UniProtKB-SubCell"/>
</dbReference>
<dbReference type="GO" id="GO:0003677">
    <property type="term" value="F:DNA binding"/>
    <property type="evidence" value="ECO:0007669"/>
    <property type="project" value="UniProtKB-KW"/>
</dbReference>
<dbReference type="GO" id="GO:0046982">
    <property type="term" value="F:protein heterodimerization activity"/>
    <property type="evidence" value="ECO:0007669"/>
    <property type="project" value="InterPro"/>
</dbReference>
<dbReference type="GO" id="GO:0030527">
    <property type="term" value="F:structural constituent of chromatin"/>
    <property type="evidence" value="ECO:0007669"/>
    <property type="project" value="InterPro"/>
</dbReference>
<dbReference type="CDD" id="cd22912">
    <property type="entry name" value="HFD_H4"/>
    <property type="match status" value="1"/>
</dbReference>
<dbReference type="FunFam" id="1.10.20.10:FF:000012">
    <property type="entry name" value="Histone H4"/>
    <property type="match status" value="1"/>
</dbReference>
<dbReference type="Gene3D" id="1.10.20.10">
    <property type="entry name" value="Histone, subunit A"/>
    <property type="match status" value="1"/>
</dbReference>
<dbReference type="InterPro" id="IPR035425">
    <property type="entry name" value="CENP-T/H4_C"/>
</dbReference>
<dbReference type="InterPro" id="IPR009072">
    <property type="entry name" value="Histone-fold"/>
</dbReference>
<dbReference type="InterPro" id="IPR001951">
    <property type="entry name" value="Histone_H4"/>
</dbReference>
<dbReference type="InterPro" id="IPR019809">
    <property type="entry name" value="Histone_H4_CS"/>
</dbReference>
<dbReference type="PANTHER" id="PTHR10484">
    <property type="entry name" value="HISTONE H4"/>
    <property type="match status" value="1"/>
</dbReference>
<dbReference type="Pfam" id="PF15511">
    <property type="entry name" value="CENP-T_C"/>
    <property type="match status" value="1"/>
</dbReference>
<dbReference type="PRINTS" id="PR00623">
    <property type="entry name" value="HISTONEH4"/>
</dbReference>
<dbReference type="SMART" id="SM00417">
    <property type="entry name" value="H4"/>
    <property type="match status" value="1"/>
</dbReference>
<dbReference type="SUPFAM" id="SSF47113">
    <property type="entry name" value="Histone-fold"/>
    <property type="match status" value="1"/>
</dbReference>
<dbReference type="PROSITE" id="PS00047">
    <property type="entry name" value="HISTONE_H4"/>
    <property type="match status" value="1"/>
</dbReference>
<accession>P69151</accession>
<accession>P02311</accession>
<accession>P02312</accession>
<sequence length="103" mass="11328">MAGGKGGKGMGKVGAKRHSRKSNKASIEGITKPAIRRLARRGGVKRISSFIYDDSRQVLKSFLENVVRDAVTYTEHARRKTVTAMDVVYALKRQGRTLYGFGG</sequence>
<organism>
    <name type="scientific">Tetrahymena pyriformis</name>
    <dbReference type="NCBI Taxonomy" id="5908"/>
    <lineage>
        <taxon>Eukaryota</taxon>
        <taxon>Sar</taxon>
        <taxon>Alveolata</taxon>
        <taxon>Ciliophora</taxon>
        <taxon>Intramacronucleata</taxon>
        <taxon>Oligohymenophorea</taxon>
        <taxon>Hymenostomatida</taxon>
        <taxon>Tetrahymenina</taxon>
        <taxon>Tetrahymenidae</taxon>
        <taxon>Tetrahymena</taxon>
    </lineage>
</organism>
<feature type="initiator methionine" description="Removed" evidence="3">
    <location>
        <position position="1"/>
    </location>
</feature>
<feature type="chain" id="PRO_0000158366" description="Histone H4, minor">
    <location>
        <begin position="2"/>
        <end position="103"/>
    </location>
</feature>
<feature type="DNA-binding region">
    <location>
        <begin position="16"/>
        <end position="21"/>
    </location>
</feature>
<feature type="region of interest" description="Disordered" evidence="2">
    <location>
        <begin position="1"/>
        <end position="29"/>
    </location>
</feature>
<feature type="compositionally biased region" description="Gly residues" evidence="2">
    <location>
        <begin position="1"/>
        <end position="12"/>
    </location>
</feature>
<feature type="compositionally biased region" description="Basic residues" evidence="2">
    <location>
        <begin position="14"/>
        <end position="23"/>
    </location>
</feature>
<feature type="modified residue" description="N6-acetyllysine" evidence="3">
    <location>
        <position position="5"/>
    </location>
</feature>
<feature type="modified residue" description="N6-acetyllysine" evidence="3">
    <location>
        <position position="8"/>
    </location>
</feature>
<feature type="modified residue" description="N6-acetyllysine" evidence="3">
    <location>
        <position position="12"/>
    </location>
</feature>
<feature type="modified residue" description="N6-acetyllysine" evidence="3">
    <location>
        <position position="16"/>
    </location>
</feature>
<proteinExistence type="evidence at protein level"/>
<protein>
    <recommendedName>
        <fullName>Histone H4, minor</fullName>
    </recommendedName>
</protein>
<comment type="function">
    <text>Core component of nucleosome. Nucleosomes wrap and compact DNA into chromatin, limiting DNA accessibility to the cellular machineries which require DNA as a template. Histones thereby play a central role in transcription regulation, DNA repair, DNA replication and chromosomal stability. DNA accessibility is regulated via a complex set of post-translational modifications of histones, also called histone code, and nucleosome remodeling.</text>
</comment>
<comment type="subunit">
    <text>The nucleosome is a histone octamer containing two molecules each of H2A, H2B, H3 and H4 assembled in one H3-H4 heterotetramer and two H2A-H2B heterodimers. The octamer wraps approximately 147 bp of DNA.</text>
</comment>
<comment type="subcellular location">
    <subcellularLocation>
        <location evidence="1">Nucleus</location>
    </subcellularLocation>
    <subcellularLocation>
        <location evidence="1">Chromosome</location>
    </subcellularLocation>
</comment>
<comment type="similarity">
    <text evidence="4">Belongs to the histone H4 family.</text>
</comment>
<name>H42_TETPY</name>
<keyword id="KW-0007">Acetylation</keyword>
<keyword id="KW-0158">Chromosome</keyword>
<keyword id="KW-0903">Direct protein sequencing</keyword>
<keyword id="KW-0238">DNA-binding</keyword>
<keyword id="KW-0544">Nucleosome core</keyword>
<keyword id="KW-0539">Nucleus</keyword>
<evidence type="ECO:0000250" key="1"/>
<evidence type="ECO:0000256" key="2">
    <source>
        <dbReference type="SAM" id="MobiDB-lite"/>
    </source>
</evidence>
<evidence type="ECO:0000269" key="3">
    <source>
    </source>
</evidence>
<evidence type="ECO:0000305" key="4"/>
<reference key="1">
    <citation type="journal article" date="1984" name="J. Biochem.">
        <title>Tetrahymena histone H4. Complete amino acid sequences of two variants.</title>
        <authorList>
            <person name="Hayashi H."/>
            <person name="Nomoto M."/>
            <person name="Iwai K."/>
        </authorList>
    </citation>
    <scope>PROTEIN SEQUENCE OF 2-103</scope>
    <scope>ACETYLATION AT LYS-5; LYS-8; LYS-12 AND LYS-16</scope>
</reference>